<name>PRS2_METTH</name>
<feature type="chain" id="PRO_0000084755" description="Putative 26S proteasome regulatory subunit homolog MTH_1011">
    <location>
        <begin position="1"/>
        <end position="372"/>
    </location>
</feature>
<feature type="binding site" evidence="2">
    <location>
        <begin position="164"/>
        <end position="171"/>
    </location>
    <ligand>
        <name>ATP</name>
        <dbReference type="ChEBI" id="CHEBI:30616"/>
    </ligand>
</feature>
<gene>
    <name type="ordered locus">MTH_1011</name>
</gene>
<dbReference type="EMBL" id="AE000666">
    <property type="protein sequence ID" value="AAB85507.1"/>
    <property type="molecule type" value="Genomic_DNA"/>
</dbReference>
<dbReference type="PIR" id="H69001">
    <property type="entry name" value="H69001"/>
</dbReference>
<dbReference type="SMR" id="O27092"/>
<dbReference type="STRING" id="187420.MTH_1011"/>
<dbReference type="PaxDb" id="187420-MTH_1011"/>
<dbReference type="EnsemblBacteria" id="AAB85507">
    <property type="protein sequence ID" value="AAB85507"/>
    <property type="gene ID" value="MTH_1011"/>
</dbReference>
<dbReference type="KEGG" id="mth:MTH_1011"/>
<dbReference type="PATRIC" id="fig|187420.15.peg.994"/>
<dbReference type="HOGENOM" id="CLU_000688_21_3_2"/>
<dbReference type="InParanoid" id="O27092"/>
<dbReference type="Proteomes" id="UP000005223">
    <property type="component" value="Chromosome"/>
</dbReference>
<dbReference type="GO" id="GO:0000502">
    <property type="term" value="C:proteasome complex"/>
    <property type="evidence" value="ECO:0007669"/>
    <property type="project" value="UniProtKB-KW"/>
</dbReference>
<dbReference type="GO" id="GO:0005524">
    <property type="term" value="F:ATP binding"/>
    <property type="evidence" value="ECO:0007669"/>
    <property type="project" value="UniProtKB-KW"/>
</dbReference>
<dbReference type="GO" id="GO:0016887">
    <property type="term" value="F:ATP hydrolysis activity"/>
    <property type="evidence" value="ECO:0007669"/>
    <property type="project" value="InterPro"/>
</dbReference>
<dbReference type="GO" id="GO:0004176">
    <property type="term" value="F:ATP-dependent peptidase activity"/>
    <property type="evidence" value="ECO:0007669"/>
    <property type="project" value="TreeGrafter"/>
</dbReference>
<dbReference type="GO" id="GO:0006508">
    <property type="term" value="P:proteolysis"/>
    <property type="evidence" value="ECO:0007669"/>
    <property type="project" value="TreeGrafter"/>
</dbReference>
<dbReference type="CDD" id="cd19481">
    <property type="entry name" value="RecA-like_protease"/>
    <property type="match status" value="1"/>
</dbReference>
<dbReference type="Gene3D" id="1.10.8.60">
    <property type="match status" value="1"/>
</dbReference>
<dbReference type="Gene3D" id="3.40.50.300">
    <property type="entry name" value="P-loop containing nucleotide triphosphate hydrolases"/>
    <property type="match status" value="1"/>
</dbReference>
<dbReference type="InterPro" id="IPR003593">
    <property type="entry name" value="AAA+_ATPase"/>
</dbReference>
<dbReference type="InterPro" id="IPR003959">
    <property type="entry name" value="ATPase_AAA_core"/>
</dbReference>
<dbReference type="InterPro" id="IPR003960">
    <property type="entry name" value="ATPase_AAA_CS"/>
</dbReference>
<dbReference type="InterPro" id="IPR000641">
    <property type="entry name" value="CbxX/CfxQ"/>
</dbReference>
<dbReference type="InterPro" id="IPR027417">
    <property type="entry name" value="P-loop_NTPase"/>
</dbReference>
<dbReference type="PANTHER" id="PTHR23076:SF97">
    <property type="entry name" value="ATP-DEPENDENT ZINC METALLOPROTEASE YME1L1"/>
    <property type="match status" value="1"/>
</dbReference>
<dbReference type="PANTHER" id="PTHR23076">
    <property type="entry name" value="METALLOPROTEASE M41 FTSH"/>
    <property type="match status" value="1"/>
</dbReference>
<dbReference type="Pfam" id="PF00004">
    <property type="entry name" value="AAA"/>
    <property type="match status" value="1"/>
</dbReference>
<dbReference type="Pfam" id="PF23902">
    <property type="entry name" value="AAA_lid_PRS2_C"/>
    <property type="match status" value="1"/>
</dbReference>
<dbReference type="Pfam" id="PF23900">
    <property type="entry name" value="PRS2_N"/>
    <property type="match status" value="1"/>
</dbReference>
<dbReference type="PRINTS" id="PR00819">
    <property type="entry name" value="CBXCFQXSUPER"/>
</dbReference>
<dbReference type="SMART" id="SM00382">
    <property type="entry name" value="AAA"/>
    <property type="match status" value="1"/>
</dbReference>
<dbReference type="SUPFAM" id="SSF52540">
    <property type="entry name" value="P-loop containing nucleoside triphosphate hydrolases"/>
    <property type="match status" value="1"/>
</dbReference>
<dbReference type="PROSITE" id="PS00674">
    <property type="entry name" value="AAA"/>
    <property type="match status" value="1"/>
</dbReference>
<accession>O27092</accession>
<proteinExistence type="inferred from homology"/>
<comment type="function">
    <text evidence="1">The 26S proteasome is involved in the ATP-dependent degradation of ubiquitinated proteins. The regulatory (or ATPase) complex confers ATP dependency and substrate specificity to the 26S complex (By similarity).</text>
</comment>
<comment type="similarity">
    <text evidence="3">Belongs to the AAA ATPase family.</text>
</comment>
<reference key="1">
    <citation type="journal article" date="1997" name="J. Bacteriol.">
        <title>Complete genome sequence of Methanobacterium thermoautotrophicum deltaH: functional analysis and comparative genomics.</title>
        <authorList>
            <person name="Smith D.R."/>
            <person name="Doucette-Stamm L.A."/>
            <person name="Deloughery C."/>
            <person name="Lee H.-M."/>
            <person name="Dubois J."/>
            <person name="Aldredge T."/>
            <person name="Bashirzadeh R."/>
            <person name="Blakely D."/>
            <person name="Cook R."/>
            <person name="Gilbert K."/>
            <person name="Harrison D."/>
            <person name="Hoang L."/>
            <person name="Keagle P."/>
            <person name="Lumm W."/>
            <person name="Pothier B."/>
            <person name="Qiu D."/>
            <person name="Spadafora R."/>
            <person name="Vicare R."/>
            <person name="Wang Y."/>
            <person name="Wierzbowski J."/>
            <person name="Gibson R."/>
            <person name="Jiwani N."/>
            <person name="Caruso A."/>
            <person name="Bush D."/>
            <person name="Safer H."/>
            <person name="Patwell D."/>
            <person name="Prabhakar S."/>
            <person name="McDougall S."/>
            <person name="Shimer G."/>
            <person name="Goyal A."/>
            <person name="Pietrovski S."/>
            <person name="Church G.M."/>
            <person name="Daniels C.J."/>
            <person name="Mao J.-I."/>
            <person name="Rice P."/>
            <person name="Noelling J."/>
            <person name="Reeve J.N."/>
        </authorList>
    </citation>
    <scope>NUCLEOTIDE SEQUENCE [LARGE SCALE GENOMIC DNA]</scope>
    <source>
        <strain>ATCC 29096 / DSM 1053 / JCM 10044 / NBRC 100330 / Delta H</strain>
    </source>
</reference>
<sequence length="372" mass="42599">MVKFNNIIYDPQVSDKKFPVQASDPEREAKLVVLQPVGYPFVCNLMEAPRIDAVNKELFEIYARDQWEGFRAAEGSYLFDQKLLPDYAFKIIRAHPDGSKITRNTSIILLENDREEFHEVRSSITMDDVIGQEDAKIKCRIIMKYLEDPDRFRDWAPRNVLFHGSPGTGKTMLAKSLANELKVPLYLIKATSLIGEHVGDGARQIHELYELASKTAPSVIFIDEMDAIGLDRRYQSLRGDVSEVVNALLTEMDGINQNWGVVTIGATNNPELLDKAIRSRFEEEIEFKLPDDEERKLMLEKYIETMPLKVDFPVDKLVKLTREMSGRDIKDRVLKTALHRAIAEDSESVRAEHIEYALKERKVSGEPKHMFA</sequence>
<keyword id="KW-0067">ATP-binding</keyword>
<keyword id="KW-0547">Nucleotide-binding</keyword>
<keyword id="KW-0647">Proteasome</keyword>
<keyword id="KW-1185">Reference proteome</keyword>
<organism>
    <name type="scientific">Methanothermobacter thermautotrophicus (strain ATCC 29096 / DSM 1053 / JCM 10044 / NBRC 100330 / Delta H)</name>
    <name type="common">Methanobacterium thermoautotrophicum</name>
    <dbReference type="NCBI Taxonomy" id="187420"/>
    <lineage>
        <taxon>Archaea</taxon>
        <taxon>Methanobacteriati</taxon>
        <taxon>Methanobacteriota</taxon>
        <taxon>Methanomada group</taxon>
        <taxon>Methanobacteria</taxon>
        <taxon>Methanobacteriales</taxon>
        <taxon>Methanobacteriaceae</taxon>
        <taxon>Methanothermobacter</taxon>
    </lineage>
</organism>
<evidence type="ECO:0000250" key="1"/>
<evidence type="ECO:0000255" key="2"/>
<evidence type="ECO:0000305" key="3"/>
<protein>
    <recommendedName>
        <fullName>Putative 26S proteasome regulatory subunit homolog MTH_1011</fullName>
    </recommendedName>
</protein>